<accession>Q2JDP3</accession>
<gene>
    <name evidence="1" type="primary">rpmA</name>
    <name type="ordered locus">Francci3_1221</name>
</gene>
<organism>
    <name type="scientific">Frankia casuarinae (strain DSM 45818 / CECT 9043 / HFP020203 / CcI3)</name>
    <dbReference type="NCBI Taxonomy" id="106370"/>
    <lineage>
        <taxon>Bacteria</taxon>
        <taxon>Bacillati</taxon>
        <taxon>Actinomycetota</taxon>
        <taxon>Actinomycetes</taxon>
        <taxon>Frankiales</taxon>
        <taxon>Frankiaceae</taxon>
        <taxon>Frankia</taxon>
    </lineage>
</organism>
<proteinExistence type="inferred from homology"/>
<keyword id="KW-1185">Reference proteome</keyword>
<keyword id="KW-0687">Ribonucleoprotein</keyword>
<keyword id="KW-0689">Ribosomal protein</keyword>
<reference key="1">
    <citation type="journal article" date="2007" name="Genome Res.">
        <title>Genome characteristics of facultatively symbiotic Frankia sp. strains reflect host range and host plant biogeography.</title>
        <authorList>
            <person name="Normand P."/>
            <person name="Lapierre P."/>
            <person name="Tisa L.S."/>
            <person name="Gogarten J.P."/>
            <person name="Alloisio N."/>
            <person name="Bagnarol E."/>
            <person name="Bassi C.A."/>
            <person name="Berry A.M."/>
            <person name="Bickhart D.M."/>
            <person name="Choisne N."/>
            <person name="Couloux A."/>
            <person name="Cournoyer B."/>
            <person name="Cruveiller S."/>
            <person name="Daubin V."/>
            <person name="Demange N."/>
            <person name="Francino M.P."/>
            <person name="Goltsman E."/>
            <person name="Huang Y."/>
            <person name="Kopp O.R."/>
            <person name="Labarre L."/>
            <person name="Lapidus A."/>
            <person name="Lavire C."/>
            <person name="Marechal J."/>
            <person name="Martinez M."/>
            <person name="Mastronunzio J.E."/>
            <person name="Mullin B.C."/>
            <person name="Niemann J."/>
            <person name="Pujic P."/>
            <person name="Rawnsley T."/>
            <person name="Rouy Z."/>
            <person name="Schenowitz C."/>
            <person name="Sellstedt A."/>
            <person name="Tavares F."/>
            <person name="Tomkins J.P."/>
            <person name="Vallenet D."/>
            <person name="Valverde C."/>
            <person name="Wall L.G."/>
            <person name="Wang Y."/>
            <person name="Medigue C."/>
            <person name="Benson D.R."/>
        </authorList>
    </citation>
    <scope>NUCLEOTIDE SEQUENCE [LARGE SCALE GENOMIC DNA]</scope>
    <source>
        <strain>DSM 45818 / CECT 9043 / HFP020203 / CcI3</strain>
    </source>
</reference>
<comment type="similarity">
    <text evidence="1">Belongs to the bacterial ribosomal protein bL27 family.</text>
</comment>
<sequence>MAHKKGASSSRNGRDSNAQRLGVKRFGGQYVKAGEIIVRQRGTHFHPGDLVGRGKDDTLFALSPGHVRFGHRRGRRVVNVVAEAAVPA</sequence>
<evidence type="ECO:0000255" key="1">
    <source>
        <dbReference type="HAMAP-Rule" id="MF_00539"/>
    </source>
</evidence>
<evidence type="ECO:0000256" key="2">
    <source>
        <dbReference type="SAM" id="MobiDB-lite"/>
    </source>
</evidence>
<evidence type="ECO:0000305" key="3"/>
<dbReference type="EMBL" id="CP000249">
    <property type="protein sequence ID" value="ABD10599.1"/>
    <property type="molecule type" value="Genomic_DNA"/>
</dbReference>
<dbReference type="RefSeq" id="WP_011435665.1">
    <property type="nucleotide sequence ID" value="NZ_LRTJ01000040.1"/>
</dbReference>
<dbReference type="SMR" id="Q2JDP3"/>
<dbReference type="STRING" id="106370.Francci3_1221"/>
<dbReference type="KEGG" id="fra:Francci3_1221"/>
<dbReference type="eggNOG" id="COG0211">
    <property type="taxonomic scope" value="Bacteria"/>
</dbReference>
<dbReference type="HOGENOM" id="CLU_095424_4_0_11"/>
<dbReference type="OrthoDB" id="9803474at2"/>
<dbReference type="PhylomeDB" id="Q2JDP3"/>
<dbReference type="Proteomes" id="UP000001937">
    <property type="component" value="Chromosome"/>
</dbReference>
<dbReference type="GO" id="GO:0022625">
    <property type="term" value="C:cytosolic large ribosomal subunit"/>
    <property type="evidence" value="ECO:0007669"/>
    <property type="project" value="TreeGrafter"/>
</dbReference>
<dbReference type="GO" id="GO:0003735">
    <property type="term" value="F:structural constituent of ribosome"/>
    <property type="evidence" value="ECO:0007669"/>
    <property type="project" value="InterPro"/>
</dbReference>
<dbReference type="GO" id="GO:0006412">
    <property type="term" value="P:translation"/>
    <property type="evidence" value="ECO:0007669"/>
    <property type="project" value="UniProtKB-UniRule"/>
</dbReference>
<dbReference type="FunFam" id="2.40.50.100:FF:000020">
    <property type="entry name" value="50S ribosomal protein L27"/>
    <property type="match status" value="1"/>
</dbReference>
<dbReference type="Gene3D" id="2.40.50.100">
    <property type="match status" value="1"/>
</dbReference>
<dbReference type="HAMAP" id="MF_00539">
    <property type="entry name" value="Ribosomal_bL27"/>
    <property type="match status" value="1"/>
</dbReference>
<dbReference type="InterPro" id="IPR001684">
    <property type="entry name" value="Ribosomal_bL27"/>
</dbReference>
<dbReference type="InterPro" id="IPR018261">
    <property type="entry name" value="Ribosomal_bL27_CS"/>
</dbReference>
<dbReference type="NCBIfam" id="TIGR00062">
    <property type="entry name" value="L27"/>
    <property type="match status" value="1"/>
</dbReference>
<dbReference type="PANTHER" id="PTHR15893:SF0">
    <property type="entry name" value="LARGE RIBOSOMAL SUBUNIT PROTEIN BL27M"/>
    <property type="match status" value="1"/>
</dbReference>
<dbReference type="PANTHER" id="PTHR15893">
    <property type="entry name" value="RIBOSOMAL PROTEIN L27"/>
    <property type="match status" value="1"/>
</dbReference>
<dbReference type="Pfam" id="PF01016">
    <property type="entry name" value="Ribosomal_L27"/>
    <property type="match status" value="1"/>
</dbReference>
<dbReference type="PRINTS" id="PR00063">
    <property type="entry name" value="RIBOSOMALL27"/>
</dbReference>
<dbReference type="SUPFAM" id="SSF110324">
    <property type="entry name" value="Ribosomal L27 protein-like"/>
    <property type="match status" value="1"/>
</dbReference>
<dbReference type="PROSITE" id="PS00831">
    <property type="entry name" value="RIBOSOMAL_L27"/>
    <property type="match status" value="1"/>
</dbReference>
<name>RL27_FRACC</name>
<protein>
    <recommendedName>
        <fullName evidence="1">Large ribosomal subunit protein bL27</fullName>
    </recommendedName>
    <alternativeName>
        <fullName evidence="3">50S ribosomal protein L27</fullName>
    </alternativeName>
</protein>
<feature type="chain" id="PRO_1000017480" description="Large ribosomal subunit protein bL27">
    <location>
        <begin position="1"/>
        <end position="88"/>
    </location>
</feature>
<feature type="region of interest" description="Disordered" evidence="2">
    <location>
        <begin position="1"/>
        <end position="21"/>
    </location>
</feature>
<feature type="compositionally biased region" description="Polar residues" evidence="2">
    <location>
        <begin position="7"/>
        <end position="19"/>
    </location>
</feature>